<proteinExistence type="inferred from homology"/>
<evidence type="ECO:0000255" key="1">
    <source>
        <dbReference type="HAMAP-Rule" id="MF_01200"/>
    </source>
</evidence>
<organism>
    <name type="scientific">Psychrobacter arcticus (strain DSM 17307 / VKM B-2377 / 273-4)</name>
    <dbReference type="NCBI Taxonomy" id="259536"/>
    <lineage>
        <taxon>Bacteria</taxon>
        <taxon>Pseudomonadati</taxon>
        <taxon>Pseudomonadota</taxon>
        <taxon>Gammaproteobacteria</taxon>
        <taxon>Moraxellales</taxon>
        <taxon>Moraxellaceae</taxon>
        <taxon>Psychrobacter</taxon>
    </lineage>
</organism>
<comment type="function">
    <text evidence="1">Catalyzes the decarboxylation of orotidine 5'-monophosphate (OMP) to uridine 5'-monophosphate (UMP).</text>
</comment>
<comment type="catalytic activity">
    <reaction evidence="1">
        <text>orotidine 5'-phosphate + H(+) = UMP + CO2</text>
        <dbReference type="Rhea" id="RHEA:11596"/>
        <dbReference type="ChEBI" id="CHEBI:15378"/>
        <dbReference type="ChEBI" id="CHEBI:16526"/>
        <dbReference type="ChEBI" id="CHEBI:57538"/>
        <dbReference type="ChEBI" id="CHEBI:57865"/>
        <dbReference type="EC" id="4.1.1.23"/>
    </reaction>
</comment>
<comment type="pathway">
    <text evidence="1">Pyrimidine metabolism; UMP biosynthesis via de novo pathway; UMP from orotate: step 2/2.</text>
</comment>
<comment type="subunit">
    <text evidence="1">Homodimer.</text>
</comment>
<comment type="similarity">
    <text evidence="1">Belongs to the OMP decarboxylase family. Type 1 subfamily.</text>
</comment>
<feature type="chain" id="PRO_0000241894" description="Orotidine 5'-phosphate decarboxylase">
    <location>
        <begin position="1"/>
        <end position="232"/>
    </location>
</feature>
<feature type="active site" description="Proton donor" evidence="1">
    <location>
        <position position="65"/>
    </location>
</feature>
<feature type="binding site" evidence="1">
    <location>
        <position position="14"/>
    </location>
    <ligand>
        <name>substrate</name>
    </ligand>
</feature>
<feature type="binding site" evidence="1">
    <location>
        <position position="36"/>
    </location>
    <ligand>
        <name>substrate</name>
    </ligand>
</feature>
<feature type="binding site" evidence="1">
    <location>
        <begin position="63"/>
        <end position="72"/>
    </location>
    <ligand>
        <name>substrate</name>
    </ligand>
</feature>
<feature type="binding site" evidence="1">
    <location>
        <position position="122"/>
    </location>
    <ligand>
        <name>substrate</name>
    </ligand>
</feature>
<feature type="binding site" evidence="1">
    <location>
        <position position="183"/>
    </location>
    <ligand>
        <name>substrate</name>
    </ligand>
</feature>
<feature type="binding site" evidence="1">
    <location>
        <position position="192"/>
    </location>
    <ligand>
        <name>substrate</name>
    </ligand>
</feature>
<feature type="binding site" evidence="1">
    <location>
        <position position="212"/>
    </location>
    <ligand>
        <name>substrate</name>
    </ligand>
</feature>
<feature type="binding site" evidence="1">
    <location>
        <position position="213"/>
    </location>
    <ligand>
        <name>substrate</name>
    </ligand>
</feature>
<reference key="1">
    <citation type="journal article" date="2010" name="Appl. Environ. Microbiol.">
        <title>The genome sequence of Psychrobacter arcticus 273-4, a psychroactive Siberian permafrost bacterium, reveals mechanisms for adaptation to low-temperature growth.</title>
        <authorList>
            <person name="Ayala-del-Rio H.L."/>
            <person name="Chain P.S."/>
            <person name="Grzymski J.J."/>
            <person name="Ponder M.A."/>
            <person name="Ivanova N."/>
            <person name="Bergholz P.W."/>
            <person name="Di Bartolo G."/>
            <person name="Hauser L."/>
            <person name="Land M."/>
            <person name="Bakermans C."/>
            <person name="Rodrigues D."/>
            <person name="Klappenbach J."/>
            <person name="Zarka D."/>
            <person name="Larimer F."/>
            <person name="Richardson P."/>
            <person name="Murray A."/>
            <person name="Thomashow M."/>
            <person name="Tiedje J.M."/>
        </authorList>
    </citation>
    <scope>NUCLEOTIDE SEQUENCE [LARGE SCALE GENOMIC DNA]</scope>
    <source>
        <strain>DSM 17307 / VKM B-2377 / 273-4</strain>
    </source>
</reference>
<accession>Q4FRL9</accession>
<gene>
    <name evidence="1" type="primary">pyrF</name>
    <name type="ordered locus">Psyc_1491</name>
</gene>
<keyword id="KW-0210">Decarboxylase</keyword>
<keyword id="KW-0456">Lyase</keyword>
<keyword id="KW-0665">Pyrimidine biosynthesis</keyword>
<keyword id="KW-1185">Reference proteome</keyword>
<sequence>MNNAINSPVIVALDNMTKNASLALADQLDPALCRLKVGKELYTRCGPEIVKALHQRQFEVFLDLKFHDIPNTTAQAVLAAAELGIWMVNVHASAGLEAMALAKQRLLDSDFDTLLIAVTVLTSMDNEALMQTGITDGLDAQVSRLAQLTKQAGLDGVVCSAQEAKTLKALCGQDFKLITPGIRLLDDNADDQKRICTPKQALNDGSDYLVIGRSITQAADPAAKLQLILQSL</sequence>
<protein>
    <recommendedName>
        <fullName evidence="1">Orotidine 5'-phosphate decarboxylase</fullName>
        <ecNumber evidence="1">4.1.1.23</ecNumber>
    </recommendedName>
    <alternativeName>
        <fullName evidence="1">OMP decarboxylase</fullName>
        <shortName evidence="1">OMPDCase</shortName>
        <shortName evidence="1">OMPdecase</shortName>
    </alternativeName>
</protein>
<name>PYRF_PSYA2</name>
<dbReference type="EC" id="4.1.1.23" evidence="1"/>
<dbReference type="EMBL" id="CP000082">
    <property type="protein sequence ID" value="AAZ19339.1"/>
    <property type="molecule type" value="Genomic_DNA"/>
</dbReference>
<dbReference type="RefSeq" id="WP_011280756.1">
    <property type="nucleotide sequence ID" value="NC_007204.1"/>
</dbReference>
<dbReference type="SMR" id="Q4FRL9"/>
<dbReference type="STRING" id="259536.Psyc_1491"/>
<dbReference type="KEGG" id="par:Psyc_1491"/>
<dbReference type="eggNOG" id="COG0284">
    <property type="taxonomic scope" value="Bacteria"/>
</dbReference>
<dbReference type="HOGENOM" id="CLU_067069_0_0_6"/>
<dbReference type="OrthoDB" id="9806203at2"/>
<dbReference type="UniPathway" id="UPA00070">
    <property type="reaction ID" value="UER00120"/>
</dbReference>
<dbReference type="Proteomes" id="UP000000546">
    <property type="component" value="Chromosome"/>
</dbReference>
<dbReference type="GO" id="GO:0005829">
    <property type="term" value="C:cytosol"/>
    <property type="evidence" value="ECO:0007669"/>
    <property type="project" value="TreeGrafter"/>
</dbReference>
<dbReference type="GO" id="GO:0004590">
    <property type="term" value="F:orotidine-5'-phosphate decarboxylase activity"/>
    <property type="evidence" value="ECO:0007669"/>
    <property type="project" value="UniProtKB-UniRule"/>
</dbReference>
<dbReference type="GO" id="GO:0006207">
    <property type="term" value="P:'de novo' pyrimidine nucleobase biosynthetic process"/>
    <property type="evidence" value="ECO:0007669"/>
    <property type="project" value="InterPro"/>
</dbReference>
<dbReference type="GO" id="GO:0044205">
    <property type="term" value="P:'de novo' UMP biosynthetic process"/>
    <property type="evidence" value="ECO:0007669"/>
    <property type="project" value="UniProtKB-UniRule"/>
</dbReference>
<dbReference type="CDD" id="cd04725">
    <property type="entry name" value="OMP_decarboxylase_like"/>
    <property type="match status" value="1"/>
</dbReference>
<dbReference type="FunFam" id="3.20.20.70:FF:000015">
    <property type="entry name" value="Orotidine 5'-phosphate decarboxylase"/>
    <property type="match status" value="1"/>
</dbReference>
<dbReference type="Gene3D" id="3.20.20.70">
    <property type="entry name" value="Aldolase class I"/>
    <property type="match status" value="1"/>
</dbReference>
<dbReference type="HAMAP" id="MF_01200_B">
    <property type="entry name" value="OMPdecase_type1_B"/>
    <property type="match status" value="1"/>
</dbReference>
<dbReference type="InterPro" id="IPR013785">
    <property type="entry name" value="Aldolase_TIM"/>
</dbReference>
<dbReference type="InterPro" id="IPR014732">
    <property type="entry name" value="OMPdecase"/>
</dbReference>
<dbReference type="InterPro" id="IPR018089">
    <property type="entry name" value="OMPdecase_AS"/>
</dbReference>
<dbReference type="InterPro" id="IPR047596">
    <property type="entry name" value="OMPdecase_bac"/>
</dbReference>
<dbReference type="InterPro" id="IPR001754">
    <property type="entry name" value="OMPdeCOase_dom"/>
</dbReference>
<dbReference type="InterPro" id="IPR011060">
    <property type="entry name" value="RibuloseP-bd_barrel"/>
</dbReference>
<dbReference type="NCBIfam" id="NF001273">
    <property type="entry name" value="PRK00230.1"/>
    <property type="match status" value="1"/>
</dbReference>
<dbReference type="NCBIfam" id="TIGR01740">
    <property type="entry name" value="pyrF"/>
    <property type="match status" value="1"/>
</dbReference>
<dbReference type="PANTHER" id="PTHR32119">
    <property type="entry name" value="OROTIDINE 5'-PHOSPHATE DECARBOXYLASE"/>
    <property type="match status" value="1"/>
</dbReference>
<dbReference type="PANTHER" id="PTHR32119:SF2">
    <property type="entry name" value="OROTIDINE 5'-PHOSPHATE DECARBOXYLASE"/>
    <property type="match status" value="1"/>
</dbReference>
<dbReference type="Pfam" id="PF00215">
    <property type="entry name" value="OMPdecase"/>
    <property type="match status" value="1"/>
</dbReference>
<dbReference type="SMART" id="SM00934">
    <property type="entry name" value="OMPdecase"/>
    <property type="match status" value="1"/>
</dbReference>
<dbReference type="SUPFAM" id="SSF51366">
    <property type="entry name" value="Ribulose-phoshate binding barrel"/>
    <property type="match status" value="1"/>
</dbReference>
<dbReference type="PROSITE" id="PS00156">
    <property type="entry name" value="OMPDECASE"/>
    <property type="match status" value="1"/>
</dbReference>